<gene>
    <name evidence="1" type="primary">leuC</name>
    <name type="ordered locus">SaurJH9_2096</name>
</gene>
<comment type="function">
    <text evidence="1">Catalyzes the isomerization between 2-isopropylmalate and 3-isopropylmalate, via the formation of 2-isopropylmaleate.</text>
</comment>
<comment type="catalytic activity">
    <reaction evidence="1">
        <text>(2R,3S)-3-isopropylmalate = (2S)-2-isopropylmalate</text>
        <dbReference type="Rhea" id="RHEA:32287"/>
        <dbReference type="ChEBI" id="CHEBI:1178"/>
        <dbReference type="ChEBI" id="CHEBI:35121"/>
        <dbReference type="EC" id="4.2.1.33"/>
    </reaction>
</comment>
<comment type="cofactor">
    <cofactor evidence="1">
        <name>[4Fe-4S] cluster</name>
        <dbReference type="ChEBI" id="CHEBI:49883"/>
    </cofactor>
    <text evidence="1">Binds 1 [4Fe-4S] cluster per subunit.</text>
</comment>
<comment type="pathway">
    <text evidence="1">Amino-acid biosynthesis; L-leucine biosynthesis; L-leucine from 3-methyl-2-oxobutanoate: step 2/4.</text>
</comment>
<comment type="subunit">
    <text evidence="1">Heterodimer of LeuC and LeuD.</text>
</comment>
<comment type="similarity">
    <text evidence="1">Belongs to the aconitase/IPM isomerase family. LeuC type 1 subfamily.</text>
</comment>
<sequence length="456" mass="50326">MGQTLFDKVWNRHVLYGKLGEPQLLYIDLHLIHEVTSPQAFEGLRLQNRKLRRPDLTFATLDHNVPTIDIFNIKDEIANKQITTLQKNAIDFGVHIFDMGSDEQGIVHMVGPETGLTQPGKTIVCGDSHTATHGAFGAIAFGIGTSEVEHVFATQTLWQTKPKNLKIDINGTLPTGVYAKDIILHLIKTYGVDFGTGYALEFTGETIKNLSMDGRMTICNMAIEGGAKYGIIQPDDITFEYVKGRPFADNFAKSVDKWRELYSDDDAIFDRVIELDVSTLEPQVTWGTNPEMGVNFSEPFPEINDINDQRAYDYMGLEPGQKAEDIDLGYVFLGSCTNARLSDLIEASHIVKGNKVHPNITAIVVPGSRTVKKEAEKLGLDTIFKNAGFEWREPGCSMCLGMNPDQVPEGVHCASTSNRNFEGRQGKGARTHLVSPAMAAAAAIHGKFVDVRKVVV</sequence>
<name>LEUC_STAA9</name>
<organism>
    <name type="scientific">Staphylococcus aureus (strain JH9)</name>
    <dbReference type="NCBI Taxonomy" id="359786"/>
    <lineage>
        <taxon>Bacteria</taxon>
        <taxon>Bacillati</taxon>
        <taxon>Bacillota</taxon>
        <taxon>Bacilli</taxon>
        <taxon>Bacillales</taxon>
        <taxon>Staphylococcaceae</taxon>
        <taxon>Staphylococcus</taxon>
    </lineage>
</organism>
<feature type="chain" id="PRO_1000084231" description="3-isopropylmalate dehydratase large subunit">
    <location>
        <begin position="1"/>
        <end position="456"/>
    </location>
</feature>
<feature type="binding site" evidence="1">
    <location>
        <position position="336"/>
    </location>
    <ligand>
        <name>[4Fe-4S] cluster</name>
        <dbReference type="ChEBI" id="CHEBI:49883"/>
    </ligand>
</feature>
<feature type="binding site" evidence="1">
    <location>
        <position position="396"/>
    </location>
    <ligand>
        <name>[4Fe-4S] cluster</name>
        <dbReference type="ChEBI" id="CHEBI:49883"/>
    </ligand>
</feature>
<feature type="binding site" evidence="1">
    <location>
        <position position="399"/>
    </location>
    <ligand>
        <name>[4Fe-4S] cluster</name>
        <dbReference type="ChEBI" id="CHEBI:49883"/>
    </ligand>
</feature>
<reference key="1">
    <citation type="submission" date="2007-05" db="EMBL/GenBank/DDBJ databases">
        <title>Complete sequence of chromosome of Staphylococcus aureus subsp. aureus JH9.</title>
        <authorList>
            <consortium name="US DOE Joint Genome Institute"/>
            <person name="Copeland A."/>
            <person name="Lucas S."/>
            <person name="Lapidus A."/>
            <person name="Barry K."/>
            <person name="Detter J.C."/>
            <person name="Glavina del Rio T."/>
            <person name="Hammon N."/>
            <person name="Israni S."/>
            <person name="Pitluck S."/>
            <person name="Chain P."/>
            <person name="Malfatti S."/>
            <person name="Shin M."/>
            <person name="Vergez L."/>
            <person name="Schmutz J."/>
            <person name="Larimer F."/>
            <person name="Land M."/>
            <person name="Hauser L."/>
            <person name="Kyrpides N."/>
            <person name="Kim E."/>
            <person name="Tomasz A."/>
            <person name="Richardson P."/>
        </authorList>
    </citation>
    <scope>NUCLEOTIDE SEQUENCE [LARGE SCALE GENOMIC DNA]</scope>
    <source>
        <strain>JH9</strain>
    </source>
</reference>
<dbReference type="EC" id="4.2.1.33" evidence="1"/>
<dbReference type="EMBL" id="CP000703">
    <property type="protein sequence ID" value="ABQ49878.1"/>
    <property type="molecule type" value="Genomic_DNA"/>
</dbReference>
<dbReference type="RefSeq" id="WP_000531823.1">
    <property type="nucleotide sequence ID" value="NC_009487.1"/>
</dbReference>
<dbReference type="SMR" id="A5IUK5"/>
<dbReference type="KEGG" id="saj:SaurJH9_2096"/>
<dbReference type="HOGENOM" id="CLU_006714_3_4_9"/>
<dbReference type="UniPathway" id="UPA00048">
    <property type="reaction ID" value="UER00071"/>
</dbReference>
<dbReference type="GO" id="GO:0003861">
    <property type="term" value="F:3-isopropylmalate dehydratase activity"/>
    <property type="evidence" value="ECO:0007669"/>
    <property type="project" value="UniProtKB-UniRule"/>
</dbReference>
<dbReference type="GO" id="GO:0051539">
    <property type="term" value="F:4 iron, 4 sulfur cluster binding"/>
    <property type="evidence" value="ECO:0007669"/>
    <property type="project" value="UniProtKB-KW"/>
</dbReference>
<dbReference type="GO" id="GO:0046872">
    <property type="term" value="F:metal ion binding"/>
    <property type="evidence" value="ECO:0007669"/>
    <property type="project" value="UniProtKB-KW"/>
</dbReference>
<dbReference type="GO" id="GO:0009098">
    <property type="term" value="P:L-leucine biosynthetic process"/>
    <property type="evidence" value="ECO:0007669"/>
    <property type="project" value="UniProtKB-UniRule"/>
</dbReference>
<dbReference type="CDD" id="cd01583">
    <property type="entry name" value="IPMI"/>
    <property type="match status" value="1"/>
</dbReference>
<dbReference type="Gene3D" id="3.30.499.10">
    <property type="entry name" value="Aconitase, domain 3"/>
    <property type="match status" value="2"/>
</dbReference>
<dbReference type="HAMAP" id="MF_01026">
    <property type="entry name" value="LeuC_type1"/>
    <property type="match status" value="1"/>
</dbReference>
<dbReference type="InterPro" id="IPR004430">
    <property type="entry name" value="3-IsopropMal_deHydase_lsu"/>
</dbReference>
<dbReference type="InterPro" id="IPR015931">
    <property type="entry name" value="Acnase/IPM_dHydase_lsu_aba_1/3"/>
</dbReference>
<dbReference type="InterPro" id="IPR001030">
    <property type="entry name" value="Acoase/IPM_deHydtase_lsu_aba"/>
</dbReference>
<dbReference type="InterPro" id="IPR018136">
    <property type="entry name" value="Aconitase_4Fe-4S_BS"/>
</dbReference>
<dbReference type="InterPro" id="IPR036008">
    <property type="entry name" value="Aconitase_4Fe-4S_dom"/>
</dbReference>
<dbReference type="InterPro" id="IPR050067">
    <property type="entry name" value="IPM_dehydratase_rel_enz"/>
</dbReference>
<dbReference type="InterPro" id="IPR033941">
    <property type="entry name" value="IPMI_cat"/>
</dbReference>
<dbReference type="NCBIfam" id="TIGR00170">
    <property type="entry name" value="leuC"/>
    <property type="match status" value="1"/>
</dbReference>
<dbReference type="NCBIfam" id="NF004016">
    <property type="entry name" value="PRK05478.1"/>
    <property type="match status" value="1"/>
</dbReference>
<dbReference type="NCBIfam" id="NF009116">
    <property type="entry name" value="PRK12466.1"/>
    <property type="match status" value="1"/>
</dbReference>
<dbReference type="PANTHER" id="PTHR43822:SF9">
    <property type="entry name" value="3-ISOPROPYLMALATE DEHYDRATASE"/>
    <property type="match status" value="1"/>
</dbReference>
<dbReference type="PANTHER" id="PTHR43822">
    <property type="entry name" value="HOMOACONITASE, MITOCHONDRIAL-RELATED"/>
    <property type="match status" value="1"/>
</dbReference>
<dbReference type="Pfam" id="PF00330">
    <property type="entry name" value="Aconitase"/>
    <property type="match status" value="1"/>
</dbReference>
<dbReference type="PRINTS" id="PR00415">
    <property type="entry name" value="ACONITASE"/>
</dbReference>
<dbReference type="SUPFAM" id="SSF53732">
    <property type="entry name" value="Aconitase iron-sulfur domain"/>
    <property type="match status" value="1"/>
</dbReference>
<dbReference type="PROSITE" id="PS00450">
    <property type="entry name" value="ACONITASE_1"/>
    <property type="match status" value="1"/>
</dbReference>
<dbReference type="PROSITE" id="PS01244">
    <property type="entry name" value="ACONITASE_2"/>
    <property type="match status" value="1"/>
</dbReference>
<accession>A5IUK5</accession>
<keyword id="KW-0004">4Fe-4S</keyword>
<keyword id="KW-0028">Amino-acid biosynthesis</keyword>
<keyword id="KW-0100">Branched-chain amino acid biosynthesis</keyword>
<keyword id="KW-0408">Iron</keyword>
<keyword id="KW-0411">Iron-sulfur</keyword>
<keyword id="KW-0432">Leucine biosynthesis</keyword>
<keyword id="KW-0456">Lyase</keyword>
<keyword id="KW-0479">Metal-binding</keyword>
<proteinExistence type="inferred from homology"/>
<protein>
    <recommendedName>
        <fullName evidence="1">3-isopropylmalate dehydratase large subunit</fullName>
        <ecNumber evidence="1">4.2.1.33</ecNumber>
    </recommendedName>
    <alternativeName>
        <fullName evidence="1">Alpha-IPM isomerase</fullName>
        <shortName evidence="1">IPMI</shortName>
    </alternativeName>
    <alternativeName>
        <fullName evidence="1">Isopropylmalate isomerase</fullName>
    </alternativeName>
</protein>
<evidence type="ECO:0000255" key="1">
    <source>
        <dbReference type="HAMAP-Rule" id="MF_01026"/>
    </source>
</evidence>